<protein>
    <recommendedName>
        <fullName evidence="1">Ribulose bisphosphate carboxylase large chain</fullName>
        <shortName evidence="1">RuBisCO large subunit</shortName>
        <ecNumber evidence="1">4.1.1.39</ecNumber>
    </recommendedName>
</protein>
<accession>P28418</accession>
<evidence type="ECO:0000255" key="1">
    <source>
        <dbReference type="HAMAP-Rule" id="MF_01338"/>
    </source>
</evidence>
<reference key="1">
    <citation type="journal article" date="1992" name="Science">
        <title>Carnivorous plants: phylogeny and structural evolution.</title>
        <authorList>
            <person name="Albert V.A."/>
            <person name="Williams S.E."/>
            <person name="Chase M.W."/>
        </authorList>
    </citation>
    <scope>NUCLEOTIDE SEQUENCE [GENOMIC DNA]</scope>
</reference>
<organism>
    <name type="scientific">Geum quellyon</name>
    <name type="common">Chilean avens</name>
    <name type="synonym">Geum chiloense</name>
    <dbReference type="NCBI Taxonomy" id="3762"/>
    <lineage>
        <taxon>Eukaryota</taxon>
        <taxon>Viridiplantae</taxon>
        <taxon>Streptophyta</taxon>
        <taxon>Embryophyta</taxon>
        <taxon>Tracheophyta</taxon>
        <taxon>Spermatophyta</taxon>
        <taxon>Magnoliopsida</taxon>
        <taxon>eudicotyledons</taxon>
        <taxon>Gunneridae</taxon>
        <taxon>Pentapetalae</taxon>
        <taxon>rosids</taxon>
        <taxon>fabids</taxon>
        <taxon>Rosales</taxon>
        <taxon>Rosaceae</taxon>
        <taxon>Rosoideae</taxon>
        <taxon>Colurieae</taxon>
        <taxon>Geum</taxon>
    </lineage>
</organism>
<feature type="chain" id="PRO_0000062479" description="Ribulose bisphosphate carboxylase large chain">
    <location>
        <begin position="1" status="less than"/>
        <end position="459" status="greater than"/>
    </location>
</feature>
<feature type="active site" description="Proton acceptor" evidence="1">
    <location>
        <position position="165"/>
    </location>
</feature>
<feature type="active site" description="Proton acceptor" evidence="1">
    <location>
        <position position="284"/>
    </location>
</feature>
<feature type="binding site" description="in homodimeric partner" evidence="1">
    <location>
        <position position="113"/>
    </location>
    <ligand>
        <name>substrate</name>
    </ligand>
</feature>
<feature type="binding site" evidence="1">
    <location>
        <position position="163"/>
    </location>
    <ligand>
        <name>substrate</name>
    </ligand>
</feature>
<feature type="binding site" evidence="1">
    <location>
        <position position="167"/>
    </location>
    <ligand>
        <name>substrate</name>
    </ligand>
</feature>
<feature type="binding site" description="via carbamate group" evidence="1">
    <location>
        <position position="191"/>
    </location>
    <ligand>
        <name>Mg(2+)</name>
        <dbReference type="ChEBI" id="CHEBI:18420"/>
    </ligand>
</feature>
<feature type="binding site" evidence="1">
    <location>
        <position position="193"/>
    </location>
    <ligand>
        <name>Mg(2+)</name>
        <dbReference type="ChEBI" id="CHEBI:18420"/>
    </ligand>
</feature>
<feature type="binding site" evidence="1">
    <location>
        <position position="194"/>
    </location>
    <ligand>
        <name>Mg(2+)</name>
        <dbReference type="ChEBI" id="CHEBI:18420"/>
    </ligand>
</feature>
<feature type="binding site" evidence="1">
    <location>
        <position position="285"/>
    </location>
    <ligand>
        <name>substrate</name>
    </ligand>
</feature>
<feature type="binding site" evidence="1">
    <location>
        <position position="317"/>
    </location>
    <ligand>
        <name>substrate</name>
    </ligand>
</feature>
<feature type="binding site" evidence="1">
    <location>
        <position position="369"/>
    </location>
    <ligand>
        <name>substrate</name>
    </ligand>
</feature>
<feature type="site" description="Transition state stabilizer" evidence="1">
    <location>
        <position position="324"/>
    </location>
</feature>
<feature type="modified residue" description="N6,N6,N6-trimethyllysine" evidence="1">
    <location>
        <position position="4"/>
    </location>
</feature>
<feature type="modified residue" description="N6-carboxylysine" evidence="1">
    <location>
        <position position="191"/>
    </location>
</feature>
<feature type="disulfide bond" description="Interchain; in linked form" evidence="1">
    <location>
        <position position="237"/>
    </location>
</feature>
<feature type="non-terminal residue">
    <location>
        <position position="1"/>
    </location>
</feature>
<feature type="non-terminal residue">
    <location>
        <position position="459"/>
    </location>
</feature>
<sequence>VGFKAGVKEYKLTYYTPDYETKDTDILAAFRVTPQPGVPPEEAGAAVAAESSTGTWTTVWTDGLTSLDRYKGRCYHIEPVPGEESQFIAYVAYPLDLFEEGSVTNLFTSIVGNVFGFKALRALRLEDLRIPPAYVKTFQGPPHGIQVERDKLNKYGRPLLGCTIKPKLGLSAKNYGRAVYECLRGGLDFTKDDENVNSQPFMRWRDRFLFCAEALFKAQAETGEIKGHYLNATAGTCEEMMKRAIFARELGVPIVMHDYLTGGFTANTSLAHYCRDNGLLLHIHRAMHAVIDRQKNHGMHFRVLAKALRMSGGDHIHAGTVVGKLEGEREITLGFVDLLRDDFIEKDRSRGIYFTQDWVSLPGVLPVASGGIHVWHMPALTEIFGDDSVLQFGGGTLGHPWGNAPGAVANRVALEACVQARNEGRDLAREGNEVIREAAKWSPELAAACEVWKEIKFEF</sequence>
<geneLocation type="chloroplast"/>
<gene>
    <name evidence="1" type="primary">rbcL</name>
</gene>
<name>RBL_GEUQU</name>
<keyword id="KW-0113">Calvin cycle</keyword>
<keyword id="KW-0120">Carbon dioxide fixation</keyword>
<keyword id="KW-0150">Chloroplast</keyword>
<keyword id="KW-1015">Disulfide bond</keyword>
<keyword id="KW-0456">Lyase</keyword>
<keyword id="KW-0460">Magnesium</keyword>
<keyword id="KW-0479">Metal-binding</keyword>
<keyword id="KW-0488">Methylation</keyword>
<keyword id="KW-0503">Monooxygenase</keyword>
<keyword id="KW-0560">Oxidoreductase</keyword>
<keyword id="KW-0601">Photorespiration</keyword>
<keyword id="KW-0602">Photosynthesis</keyword>
<keyword id="KW-0934">Plastid</keyword>
<comment type="function">
    <text evidence="1">RuBisCO catalyzes two reactions: the carboxylation of D-ribulose 1,5-bisphosphate, the primary event in carbon dioxide fixation, as well as the oxidative fragmentation of the pentose substrate in the photorespiration process. Both reactions occur simultaneously and in competition at the same active site.</text>
</comment>
<comment type="catalytic activity">
    <reaction evidence="1">
        <text>2 (2R)-3-phosphoglycerate + 2 H(+) = D-ribulose 1,5-bisphosphate + CO2 + H2O</text>
        <dbReference type="Rhea" id="RHEA:23124"/>
        <dbReference type="ChEBI" id="CHEBI:15377"/>
        <dbReference type="ChEBI" id="CHEBI:15378"/>
        <dbReference type="ChEBI" id="CHEBI:16526"/>
        <dbReference type="ChEBI" id="CHEBI:57870"/>
        <dbReference type="ChEBI" id="CHEBI:58272"/>
        <dbReference type="EC" id="4.1.1.39"/>
    </reaction>
</comment>
<comment type="catalytic activity">
    <reaction evidence="1">
        <text>D-ribulose 1,5-bisphosphate + O2 = 2-phosphoglycolate + (2R)-3-phosphoglycerate + 2 H(+)</text>
        <dbReference type="Rhea" id="RHEA:36631"/>
        <dbReference type="ChEBI" id="CHEBI:15378"/>
        <dbReference type="ChEBI" id="CHEBI:15379"/>
        <dbReference type="ChEBI" id="CHEBI:57870"/>
        <dbReference type="ChEBI" id="CHEBI:58033"/>
        <dbReference type="ChEBI" id="CHEBI:58272"/>
    </reaction>
</comment>
<comment type="cofactor">
    <cofactor evidence="1">
        <name>Mg(2+)</name>
        <dbReference type="ChEBI" id="CHEBI:18420"/>
    </cofactor>
    <text evidence="1">Binds 1 Mg(2+) ion per subunit.</text>
</comment>
<comment type="subunit">
    <text evidence="1">Heterohexadecamer of 8 large chains and 8 small chains; disulfide-linked. The disulfide link is formed within the large subunit homodimers.</text>
</comment>
<comment type="subcellular location">
    <subcellularLocation>
        <location>Plastid</location>
        <location>Chloroplast</location>
    </subcellularLocation>
</comment>
<comment type="PTM">
    <text evidence="1">The disulfide bond which can form in the large chain dimeric partners within the hexadecamer appears to be associated with oxidative stress and protein turnover.</text>
</comment>
<comment type="miscellaneous">
    <text evidence="1">The basic functional RuBisCO is composed of a large chain homodimer in a 'head-to-tail' conformation. In form I RuBisCO this homodimer is arranged in a barrel-like tetramer with the small subunits forming a tetrameric 'cap' on each end of the 'barrel'.</text>
</comment>
<comment type="similarity">
    <text evidence="1">Belongs to the RuBisCO large chain family. Type I subfamily.</text>
</comment>
<proteinExistence type="inferred from homology"/>
<dbReference type="EC" id="4.1.1.39" evidence="1"/>
<dbReference type="EMBL" id="L01921">
    <property type="protein sequence ID" value="AAA84295.2"/>
    <property type="molecule type" value="Genomic_DNA"/>
</dbReference>
<dbReference type="PIR" id="T01640">
    <property type="entry name" value="T01640"/>
</dbReference>
<dbReference type="SMR" id="P28418"/>
<dbReference type="GO" id="GO:0009507">
    <property type="term" value="C:chloroplast"/>
    <property type="evidence" value="ECO:0007669"/>
    <property type="project" value="UniProtKB-SubCell"/>
</dbReference>
<dbReference type="GO" id="GO:0000287">
    <property type="term" value="F:magnesium ion binding"/>
    <property type="evidence" value="ECO:0007669"/>
    <property type="project" value="InterPro"/>
</dbReference>
<dbReference type="GO" id="GO:0004497">
    <property type="term" value="F:monooxygenase activity"/>
    <property type="evidence" value="ECO:0007669"/>
    <property type="project" value="UniProtKB-KW"/>
</dbReference>
<dbReference type="GO" id="GO:0016984">
    <property type="term" value="F:ribulose-bisphosphate carboxylase activity"/>
    <property type="evidence" value="ECO:0007669"/>
    <property type="project" value="UniProtKB-EC"/>
</dbReference>
<dbReference type="GO" id="GO:0009853">
    <property type="term" value="P:photorespiration"/>
    <property type="evidence" value="ECO:0007669"/>
    <property type="project" value="UniProtKB-KW"/>
</dbReference>
<dbReference type="GO" id="GO:0019253">
    <property type="term" value="P:reductive pentose-phosphate cycle"/>
    <property type="evidence" value="ECO:0007669"/>
    <property type="project" value="UniProtKB-KW"/>
</dbReference>
<dbReference type="CDD" id="cd08212">
    <property type="entry name" value="RuBisCO_large_I"/>
    <property type="match status" value="1"/>
</dbReference>
<dbReference type="FunFam" id="3.20.20.110:FF:000001">
    <property type="entry name" value="Ribulose bisphosphate carboxylase large chain"/>
    <property type="match status" value="1"/>
</dbReference>
<dbReference type="FunFam" id="3.30.70.150:FF:000001">
    <property type="entry name" value="Ribulose bisphosphate carboxylase large chain"/>
    <property type="match status" value="1"/>
</dbReference>
<dbReference type="Gene3D" id="3.20.20.110">
    <property type="entry name" value="Ribulose bisphosphate carboxylase, large subunit, C-terminal domain"/>
    <property type="match status" value="1"/>
</dbReference>
<dbReference type="Gene3D" id="3.30.70.150">
    <property type="entry name" value="RuBisCO large subunit, N-terminal domain"/>
    <property type="match status" value="1"/>
</dbReference>
<dbReference type="HAMAP" id="MF_01338">
    <property type="entry name" value="RuBisCO_L_type1"/>
    <property type="match status" value="1"/>
</dbReference>
<dbReference type="InterPro" id="IPR033966">
    <property type="entry name" value="RuBisCO"/>
</dbReference>
<dbReference type="InterPro" id="IPR020878">
    <property type="entry name" value="RuBisCo_large_chain_AS"/>
</dbReference>
<dbReference type="InterPro" id="IPR000685">
    <property type="entry name" value="RuBisCO_lsu_C"/>
</dbReference>
<dbReference type="InterPro" id="IPR036376">
    <property type="entry name" value="RuBisCO_lsu_C_sf"/>
</dbReference>
<dbReference type="InterPro" id="IPR017443">
    <property type="entry name" value="RuBisCO_lsu_fd_N"/>
</dbReference>
<dbReference type="InterPro" id="IPR036422">
    <property type="entry name" value="RuBisCO_lsu_N_sf"/>
</dbReference>
<dbReference type="InterPro" id="IPR020888">
    <property type="entry name" value="RuBisCO_lsuI"/>
</dbReference>
<dbReference type="NCBIfam" id="NF003252">
    <property type="entry name" value="PRK04208.1"/>
    <property type="match status" value="1"/>
</dbReference>
<dbReference type="PANTHER" id="PTHR42704">
    <property type="entry name" value="RIBULOSE BISPHOSPHATE CARBOXYLASE"/>
    <property type="match status" value="1"/>
</dbReference>
<dbReference type="PANTHER" id="PTHR42704:SF15">
    <property type="entry name" value="RIBULOSE BISPHOSPHATE CARBOXYLASE LARGE CHAIN"/>
    <property type="match status" value="1"/>
</dbReference>
<dbReference type="Pfam" id="PF00016">
    <property type="entry name" value="RuBisCO_large"/>
    <property type="match status" value="1"/>
</dbReference>
<dbReference type="Pfam" id="PF02788">
    <property type="entry name" value="RuBisCO_large_N"/>
    <property type="match status" value="1"/>
</dbReference>
<dbReference type="SFLD" id="SFLDG01052">
    <property type="entry name" value="RuBisCO"/>
    <property type="match status" value="1"/>
</dbReference>
<dbReference type="SFLD" id="SFLDS00014">
    <property type="entry name" value="RuBisCO"/>
    <property type="match status" value="1"/>
</dbReference>
<dbReference type="SFLD" id="SFLDG00301">
    <property type="entry name" value="RuBisCO-like_proteins"/>
    <property type="match status" value="1"/>
</dbReference>
<dbReference type="SUPFAM" id="SSF51649">
    <property type="entry name" value="RuBisCo, C-terminal domain"/>
    <property type="match status" value="1"/>
</dbReference>
<dbReference type="SUPFAM" id="SSF54966">
    <property type="entry name" value="RuBisCO, large subunit, small (N-terminal) domain"/>
    <property type="match status" value="1"/>
</dbReference>
<dbReference type="PROSITE" id="PS00157">
    <property type="entry name" value="RUBISCO_LARGE"/>
    <property type="match status" value="1"/>
</dbReference>